<proteinExistence type="evidence at transcript level"/>
<comment type="function">
    <text evidence="1">Inhibitor of serine proteases.</text>
</comment>
<comment type="subunit">
    <text evidence="2">Interacts with CELA2A (By similarity). Interacts with ERGIC3 and LMAN1/ERGIC53 (By similarity). Interacts with PRSS1/Trypsin (By similarity).</text>
</comment>
<comment type="subcellular location">
    <subcellularLocation>
        <location>Secreted</location>
    </subcellularLocation>
</comment>
<comment type="tissue specificity">
    <text>Plasma.</text>
</comment>
<comment type="domain">
    <text evidence="1">The reactive center loop (RCL) extends out from the body of the protein and directs binding to the target protease. The protease cleaves the serpin at the reactive site within the RCL, establishing a covalent linkage between the carboxyl group of the serpin reactive site and the serine hydroxyl of the protease. The resulting inactive serpin-protease complex is highly stable (By similarity).</text>
</comment>
<comment type="similarity">
    <text evidence="4">Belongs to the serpin family.</text>
</comment>
<sequence length="412" mass="45729">MPSSISWGLLLLAGLCCLAPGSLAGDAQETDASKDDHEHPACHKIAPNLAEFAFDLYRVLARQSNTTNIFFSPVSVATALAALSLGTKGDTHTQILEGLDFNLTEMAETDIHQGFQHLLQTLNRPNNQLQLTTGNGLFIDQSLKLADKFLEDVKNLYHSEAFSTNFTDSEEAKKQINGYVEKGTQGKIVDAVKTLDKNTVFALVNYIFFKGKWEKPFEVEHTTEGDFHVDQATTVKVPMMNRLGRFDLLYCTTLASWVLQMDYLGNATAIFLLPDEGKLQHLEDTITKEILSKFLKNRHTRTVNLYFPKLSITGTYDLRSVLSTLGITKVFSNEADLSGVTEEAPLKLSKGVHKAVLTIDERGTEAAGVTVLEAIPMSLPPDVRFDRPFLIIIYEHYTKSPLFVGKVVNPTQ</sequence>
<dbReference type="EMBL" id="AB000552">
    <property type="protein sequence ID" value="BAA24422.1"/>
    <property type="molecule type" value="mRNA"/>
</dbReference>
<dbReference type="SMR" id="O54763"/>
<dbReference type="MEROPS" id="I04.001"/>
<dbReference type="GO" id="GO:0005615">
    <property type="term" value="C:extracellular space"/>
    <property type="evidence" value="ECO:0007669"/>
    <property type="project" value="InterPro"/>
</dbReference>
<dbReference type="GO" id="GO:0004867">
    <property type="term" value="F:serine-type endopeptidase inhibitor activity"/>
    <property type="evidence" value="ECO:0007669"/>
    <property type="project" value="UniProtKB-KW"/>
</dbReference>
<dbReference type="GO" id="GO:0006953">
    <property type="term" value="P:acute-phase response"/>
    <property type="evidence" value="ECO:0007669"/>
    <property type="project" value="UniProtKB-KW"/>
</dbReference>
<dbReference type="CDD" id="cd02056">
    <property type="entry name" value="serpinA1_A1AT"/>
    <property type="match status" value="1"/>
</dbReference>
<dbReference type="FunFam" id="2.30.39.10:FF:000003">
    <property type="entry name" value="alpha-1-antitrypsin isoform X1"/>
    <property type="match status" value="1"/>
</dbReference>
<dbReference type="FunFam" id="3.30.497.10:FF:000001">
    <property type="entry name" value="Serine protease inhibitor"/>
    <property type="match status" value="1"/>
</dbReference>
<dbReference type="FunFam" id="2.10.310.10:FF:000001">
    <property type="entry name" value="Serpin family A member 1"/>
    <property type="match status" value="1"/>
</dbReference>
<dbReference type="Gene3D" id="2.30.39.10">
    <property type="entry name" value="Alpha-1-antitrypsin, domain 1"/>
    <property type="match status" value="1"/>
</dbReference>
<dbReference type="Gene3D" id="3.30.497.10">
    <property type="entry name" value="Antithrombin, subunit I, domain 2"/>
    <property type="match status" value="1"/>
</dbReference>
<dbReference type="Gene3D" id="2.10.310.10">
    <property type="entry name" value="Serpins superfamily"/>
    <property type="match status" value="1"/>
</dbReference>
<dbReference type="InterPro" id="IPR023795">
    <property type="entry name" value="Serpin_CS"/>
</dbReference>
<dbReference type="InterPro" id="IPR023796">
    <property type="entry name" value="Serpin_dom"/>
</dbReference>
<dbReference type="InterPro" id="IPR000215">
    <property type="entry name" value="Serpin_fam"/>
</dbReference>
<dbReference type="InterPro" id="IPR036186">
    <property type="entry name" value="Serpin_sf"/>
</dbReference>
<dbReference type="InterPro" id="IPR042178">
    <property type="entry name" value="Serpin_sf_1"/>
</dbReference>
<dbReference type="InterPro" id="IPR042185">
    <property type="entry name" value="Serpin_sf_2"/>
</dbReference>
<dbReference type="PANTHER" id="PTHR11461:SF165">
    <property type="entry name" value="ALPHA-1-ANTITRYPSIN"/>
    <property type="match status" value="1"/>
</dbReference>
<dbReference type="PANTHER" id="PTHR11461">
    <property type="entry name" value="SERINE PROTEASE INHIBITOR, SERPIN"/>
    <property type="match status" value="1"/>
</dbReference>
<dbReference type="Pfam" id="PF00079">
    <property type="entry name" value="Serpin"/>
    <property type="match status" value="1"/>
</dbReference>
<dbReference type="SMART" id="SM00093">
    <property type="entry name" value="SERPIN"/>
    <property type="match status" value="1"/>
</dbReference>
<dbReference type="SUPFAM" id="SSF56574">
    <property type="entry name" value="Serpins"/>
    <property type="match status" value="1"/>
</dbReference>
<dbReference type="PROSITE" id="PS00284">
    <property type="entry name" value="SERPIN"/>
    <property type="match status" value="1"/>
</dbReference>
<name>A1AT_CALCN</name>
<organism>
    <name type="scientific">Callosciurus caniceps</name>
    <name type="common">Gray-bellied squirrel</name>
    <dbReference type="NCBI Taxonomy" id="64664"/>
    <lineage>
        <taxon>Eukaryota</taxon>
        <taxon>Metazoa</taxon>
        <taxon>Chordata</taxon>
        <taxon>Craniata</taxon>
        <taxon>Vertebrata</taxon>
        <taxon>Euteleostomi</taxon>
        <taxon>Mammalia</taxon>
        <taxon>Eutheria</taxon>
        <taxon>Euarchontoglires</taxon>
        <taxon>Glires</taxon>
        <taxon>Rodentia</taxon>
        <taxon>Sciuromorpha</taxon>
        <taxon>Sciuridae</taxon>
        <taxon>Callosciurinae</taxon>
        <taxon>Callosciurini</taxon>
        <taxon>Callosciurus</taxon>
    </lineage>
</organism>
<protein>
    <recommendedName>
        <fullName>Alpha-1-antiproteinase</fullName>
    </recommendedName>
    <alternativeName>
        <fullName>Alpha-1-antitrypsin</fullName>
    </alternativeName>
    <alternativeName>
        <fullName>Alpha-1-proteinase inhibitor</fullName>
    </alternativeName>
</protein>
<accession>O54763</accession>
<evidence type="ECO:0000250" key="1"/>
<evidence type="ECO:0000250" key="2">
    <source>
        <dbReference type="UniProtKB" id="P01009"/>
    </source>
</evidence>
<evidence type="ECO:0000255" key="3"/>
<evidence type="ECO:0000305" key="4"/>
<feature type="signal peptide" evidence="3">
    <location>
        <begin position="1"/>
        <end position="24"/>
    </location>
</feature>
<feature type="chain" id="PRO_0000032383" description="Alpha-1-antiproteinase">
    <location>
        <begin position="25"/>
        <end position="412"/>
    </location>
</feature>
<feature type="region of interest" description="RCL">
    <location>
        <begin position="368"/>
        <end position="387"/>
    </location>
</feature>
<feature type="site" description="Reactive bond" evidence="1">
    <location>
        <begin position="377"/>
        <end position="378"/>
    </location>
</feature>
<feature type="modified residue" description="Phosphoserine" evidence="2">
    <location>
        <position position="33"/>
    </location>
</feature>
<feature type="modified residue" description="Phosphoserine" evidence="2">
    <location>
        <position position="378"/>
    </location>
</feature>
<feature type="glycosylation site" description="N-linked (GlcNAc...) asparagine" evidence="3">
    <location>
        <position position="65"/>
    </location>
</feature>
<feature type="glycosylation site" description="N-linked (GlcNAc...) asparagine" evidence="3">
    <location>
        <position position="102"/>
    </location>
</feature>
<feature type="glycosylation site" description="N-linked (GlcNAc...) asparagine" evidence="3">
    <location>
        <position position="165"/>
    </location>
</feature>
<feature type="glycosylation site" description="N-linked (GlcNAc...) asparagine" evidence="3">
    <location>
        <position position="266"/>
    </location>
</feature>
<reference key="1">
    <citation type="journal article" date="1997" name="Gene">
        <title>Expression of multiple alpha1-antitrypsin-like genes in hibernating species of the squirrel family.</title>
        <authorList>
            <person name="Takamatsu N."/>
            <person name="Kojima M."/>
            <person name="Taniyama M."/>
            <person name="Ohba K."/>
            <person name="Uematsu T."/>
            <person name="Segawa C."/>
            <person name="Tsutou S."/>
            <person name="Watanabe M."/>
            <person name="Kondo J."/>
            <person name="Kondo N."/>
            <person name="Shiba T."/>
        </authorList>
    </citation>
    <scope>NUCLEOTIDE SEQUENCE [MRNA]</scope>
    <source>
        <tissue>Liver</tissue>
    </source>
</reference>
<keyword id="KW-0011">Acute phase</keyword>
<keyword id="KW-0325">Glycoprotein</keyword>
<keyword id="KW-0597">Phosphoprotein</keyword>
<keyword id="KW-0646">Protease inhibitor</keyword>
<keyword id="KW-0964">Secreted</keyword>
<keyword id="KW-0722">Serine protease inhibitor</keyword>
<keyword id="KW-0732">Signal</keyword>